<protein>
    <recommendedName>
        <fullName>Linoleate 9S-lipoxygenase 1</fullName>
        <ecNumber>1.13.11.58</ecNumber>
    </recommendedName>
    <alternativeName>
        <fullName>Lipoxygenase 1</fullName>
    </alternativeName>
</protein>
<name>LOX1_HORVU</name>
<comment type="function">
    <text>Plant lipoxygenase may be involved in a number of diverse aspects of plant physiology including growth and development, pest resistance, and senescence or responses to wounding. It catalyzes the hydroperoxidation of lipids containing a cis,cis-1,4-pentadiene structure.</text>
</comment>
<comment type="catalytic activity">
    <reaction>
        <text>(9Z,12Z)-octadecadienoate + O2 = (9S)-hydroperoxy-(10E,12Z)-octadecadienoate</text>
        <dbReference type="Rhea" id="RHEA:30291"/>
        <dbReference type="ChEBI" id="CHEBI:15379"/>
        <dbReference type="ChEBI" id="CHEBI:30245"/>
        <dbReference type="ChEBI" id="CHEBI:60955"/>
        <dbReference type="EC" id="1.13.11.58"/>
    </reaction>
</comment>
<comment type="cofactor">
    <cofactor evidence="2">
        <name>Fe cation</name>
        <dbReference type="ChEBI" id="CHEBI:24875"/>
    </cofactor>
    <text evidence="2">Binds 1 Fe cation per subunit. Iron is tightly bound.</text>
</comment>
<comment type="pathway">
    <text evidence="2">Lipid metabolism; oxylipin biosynthesis.</text>
</comment>
<comment type="subunit">
    <text>Monomer.</text>
</comment>
<comment type="developmental stage">
    <text>In both quiescent and germinating seeds.</text>
</comment>
<comment type="miscellaneous">
    <text>With linoleate as substrate, lipoxygenase 1 shows a specificity for carbon 9 as the site for hydroperoxidation (in contrast to lipoxygenase 2, which shows a preference for carbon 13).</text>
</comment>
<comment type="similarity">
    <text evidence="4">Belongs to the lipoxygenase family.</text>
</comment>
<comment type="sequence caution" evidence="4">
    <conflict type="erroneous initiation">
        <sequence resource="EMBL-CDS" id="AAP04432"/>
    </conflict>
</comment>
<gene>
    <name type="primary">LOX1.1</name>
    <name type="synonym">LOXA</name>
</gene>
<accession>P29114</accession>
<accession>Q42845</accession>
<accession>Q84QC4</accession>
<proteinExistence type="evidence at protein level"/>
<sequence>MLLGGLIDTLTGANKSARLKGTVVLMRKNVLDLNDFGATIIDGIGEFLGKGVTCQLISSTAVDQDNGGRGKVGAEAELEQWVTSLPSLTTGESKFGLTFDWEVEKLGVPGAIVVNNYHSSEFLLKTITLHDVPGRSGNLTFVANSWIYPAANYRYSRVFFANDTYLPSQMPAALKPYRDDELRNLRGDDQQGPYQEHDRIYRYDVYNDLGEGRPILGGNSDHPYPRRGRTERKPNASDPSLESRLSLLEQIYVPRDEKFGHLKTSDFLGYSIKAITQGILPAVRTYVDTTPGEFDSFQDIINLYEGGIKLPKVAALEELRKQFPLQLIKDLLPVGGDSLLKLPVPHIIQENKQAWRTDEEFAREVLAGVNPVMITRLTEFPPKSSLDPSKFGDHTSTITAEHIEKNLEGLTVQQALESNRLYILDHHDRFMPFLIDVNNLPGNFIYATRTLFFLRGDGRLTPLAIELSEPIIQGGLTTAKSKVYTPVPSGSVEGWVWELAKAYVAVNDSGWHQLVSHWLNTHAVMEPFVISTNRHLSVTHPVHKLLSPHYRDTMTINALARQTLINAGGIFEMTVFPGKFALGMSAVVYKDWKFTEQGLPDDLIKRGMAVEDPSSPYKVRLLVSDYPYAADGLAIWHAIEQYVSEYLAIYYPNDGVLQGDTEVQAWWKETREVGHGDLKDAPWWPKMQSVPELAKACTTIIWIGSALHAAVNFGQYPYAGFLPNRPTVSRRRMPEPGTEEYAELERDPERAFIHTITSQIQTIIGVSLLEVLSKHSSDELYLGQRDTPEWTSDPKALEVFKRFSDRLVEIESKVVGMNHDPELKNRNGPAKFPYMLLYPNTSDHKGAAAGLTAKGIPNSISI</sequence>
<dbReference type="EC" id="1.13.11.58"/>
<dbReference type="EMBL" id="L35931">
    <property type="protein sequence ID" value="AAA64893.1"/>
    <property type="molecule type" value="Genomic_DNA"/>
</dbReference>
<dbReference type="EMBL" id="AY220737">
    <property type="protein sequence ID" value="AAP04432.1"/>
    <property type="status" value="ALT_INIT"/>
    <property type="molecule type" value="mRNA"/>
</dbReference>
<dbReference type="PIR" id="S21772">
    <property type="entry name" value="S21772"/>
</dbReference>
<dbReference type="PIR" id="S22236">
    <property type="entry name" value="S22236"/>
</dbReference>
<dbReference type="PIR" id="T05941">
    <property type="entry name" value="T05941"/>
</dbReference>
<dbReference type="SMR" id="P29114"/>
<dbReference type="BRENDA" id="1.13.11.58">
    <property type="organism ID" value="2687"/>
</dbReference>
<dbReference type="UniPathway" id="UPA00382"/>
<dbReference type="ExpressionAtlas" id="P29114">
    <property type="expression patterns" value="baseline and differential"/>
</dbReference>
<dbReference type="GO" id="GO:1990136">
    <property type="term" value="F:linoleate 9S-lipoxygenase activity"/>
    <property type="evidence" value="ECO:0007669"/>
    <property type="project" value="UniProtKB-EC"/>
</dbReference>
<dbReference type="GO" id="GO:0046872">
    <property type="term" value="F:metal ion binding"/>
    <property type="evidence" value="ECO:0007669"/>
    <property type="project" value="UniProtKB-KW"/>
</dbReference>
<dbReference type="GO" id="GO:0006633">
    <property type="term" value="P:fatty acid biosynthetic process"/>
    <property type="evidence" value="ECO:0007669"/>
    <property type="project" value="UniProtKB-KW"/>
</dbReference>
<dbReference type="GO" id="GO:0034440">
    <property type="term" value="P:lipid oxidation"/>
    <property type="evidence" value="ECO:0007669"/>
    <property type="project" value="InterPro"/>
</dbReference>
<dbReference type="GO" id="GO:0031408">
    <property type="term" value="P:oxylipin biosynthetic process"/>
    <property type="evidence" value="ECO:0007669"/>
    <property type="project" value="UniProtKB-UniPathway"/>
</dbReference>
<dbReference type="CDD" id="cd01751">
    <property type="entry name" value="PLAT_LH2"/>
    <property type="match status" value="1"/>
</dbReference>
<dbReference type="FunFam" id="1.20.245.10:FF:000002">
    <property type="entry name" value="Lipoxygenase"/>
    <property type="match status" value="1"/>
</dbReference>
<dbReference type="FunFam" id="3.10.450.60:FF:000002">
    <property type="entry name" value="Lipoxygenase"/>
    <property type="match status" value="1"/>
</dbReference>
<dbReference type="FunFam" id="4.10.372.10:FF:000001">
    <property type="entry name" value="Lipoxygenase"/>
    <property type="match status" value="1"/>
</dbReference>
<dbReference type="Gene3D" id="3.10.450.60">
    <property type="match status" value="1"/>
</dbReference>
<dbReference type="Gene3D" id="4.10.375.10">
    <property type="entry name" value="Lipoxygenase-1, Domain 2"/>
    <property type="match status" value="1"/>
</dbReference>
<dbReference type="Gene3D" id="4.10.372.10">
    <property type="entry name" value="Lipoxygenase-1, Domain 3"/>
    <property type="match status" value="1"/>
</dbReference>
<dbReference type="Gene3D" id="1.20.245.10">
    <property type="entry name" value="Lipoxygenase-1, Domain 5"/>
    <property type="match status" value="1"/>
</dbReference>
<dbReference type="Gene3D" id="2.60.60.20">
    <property type="entry name" value="PLAT/LH2 domain"/>
    <property type="match status" value="1"/>
</dbReference>
<dbReference type="InterPro" id="IPR000907">
    <property type="entry name" value="LipOase"/>
</dbReference>
<dbReference type="InterPro" id="IPR013819">
    <property type="entry name" value="LipOase_C"/>
</dbReference>
<dbReference type="InterPro" id="IPR036226">
    <property type="entry name" value="LipOase_C_sf"/>
</dbReference>
<dbReference type="InterPro" id="IPR020834">
    <property type="entry name" value="LipOase_CS"/>
</dbReference>
<dbReference type="InterPro" id="IPR020833">
    <property type="entry name" value="LipOase_Fe_BS"/>
</dbReference>
<dbReference type="InterPro" id="IPR001246">
    <property type="entry name" value="LipOase_plant"/>
</dbReference>
<dbReference type="InterPro" id="IPR042057">
    <property type="entry name" value="Lipoxy_PLAT/LH2"/>
</dbReference>
<dbReference type="InterPro" id="IPR027433">
    <property type="entry name" value="Lipoxygenase_dom_3"/>
</dbReference>
<dbReference type="InterPro" id="IPR001024">
    <property type="entry name" value="PLAT/LH2_dom"/>
</dbReference>
<dbReference type="InterPro" id="IPR036392">
    <property type="entry name" value="PLAT/LH2_dom_sf"/>
</dbReference>
<dbReference type="PANTHER" id="PTHR11771">
    <property type="entry name" value="LIPOXYGENASE"/>
    <property type="match status" value="1"/>
</dbReference>
<dbReference type="Pfam" id="PF00305">
    <property type="entry name" value="Lipoxygenase"/>
    <property type="match status" value="1"/>
</dbReference>
<dbReference type="Pfam" id="PF01477">
    <property type="entry name" value="PLAT"/>
    <property type="match status" value="1"/>
</dbReference>
<dbReference type="PRINTS" id="PR00087">
    <property type="entry name" value="LIPOXYGENASE"/>
</dbReference>
<dbReference type="PRINTS" id="PR00468">
    <property type="entry name" value="PLTLPOXGNASE"/>
</dbReference>
<dbReference type="SMART" id="SM00308">
    <property type="entry name" value="LH2"/>
    <property type="match status" value="1"/>
</dbReference>
<dbReference type="SUPFAM" id="SSF49723">
    <property type="entry name" value="Lipase/lipooxygenase domain (PLAT/LH2 domain)"/>
    <property type="match status" value="1"/>
</dbReference>
<dbReference type="SUPFAM" id="SSF48484">
    <property type="entry name" value="Lipoxigenase"/>
    <property type="match status" value="1"/>
</dbReference>
<dbReference type="PROSITE" id="PS00711">
    <property type="entry name" value="LIPOXYGENASE_1"/>
    <property type="match status" value="1"/>
</dbReference>
<dbReference type="PROSITE" id="PS00081">
    <property type="entry name" value="LIPOXYGENASE_2"/>
    <property type="match status" value="1"/>
</dbReference>
<dbReference type="PROSITE" id="PS51393">
    <property type="entry name" value="LIPOXYGENASE_3"/>
    <property type="match status" value="1"/>
</dbReference>
<dbReference type="PROSITE" id="PS50095">
    <property type="entry name" value="PLAT"/>
    <property type="match status" value="1"/>
</dbReference>
<organism>
    <name type="scientific">Hordeum vulgare</name>
    <name type="common">Barley</name>
    <dbReference type="NCBI Taxonomy" id="4513"/>
    <lineage>
        <taxon>Eukaryota</taxon>
        <taxon>Viridiplantae</taxon>
        <taxon>Streptophyta</taxon>
        <taxon>Embryophyta</taxon>
        <taxon>Tracheophyta</taxon>
        <taxon>Spermatophyta</taxon>
        <taxon>Magnoliopsida</taxon>
        <taxon>Liliopsida</taxon>
        <taxon>Poales</taxon>
        <taxon>Poaceae</taxon>
        <taxon>BOP clade</taxon>
        <taxon>Pooideae</taxon>
        <taxon>Triticodae</taxon>
        <taxon>Triticeae</taxon>
        <taxon>Hordeinae</taxon>
        <taxon>Hordeum</taxon>
    </lineage>
</organism>
<feature type="chain" id="PRO_0000220723" description="Linoleate 9S-lipoxygenase 1">
    <location>
        <begin position="1"/>
        <end position="862"/>
    </location>
</feature>
<feature type="domain" description="PLAT" evidence="1">
    <location>
        <begin position="34"/>
        <end position="161"/>
    </location>
</feature>
<feature type="domain" description="Lipoxygenase" evidence="2">
    <location>
        <begin position="164"/>
        <end position="862"/>
    </location>
</feature>
<feature type="region of interest" description="Disordered" evidence="3">
    <location>
        <begin position="212"/>
        <end position="241"/>
    </location>
</feature>
<feature type="binding site" evidence="2">
    <location>
        <position position="517"/>
    </location>
    <ligand>
        <name>Fe cation</name>
        <dbReference type="ChEBI" id="CHEBI:24875"/>
        <note>catalytic</note>
    </ligand>
</feature>
<feature type="binding site" evidence="2">
    <location>
        <position position="522"/>
    </location>
    <ligand>
        <name>Fe cation</name>
        <dbReference type="ChEBI" id="CHEBI:24875"/>
        <note>catalytic</note>
    </ligand>
</feature>
<feature type="binding site" evidence="2">
    <location>
        <position position="708"/>
    </location>
    <ligand>
        <name>Fe cation</name>
        <dbReference type="ChEBI" id="CHEBI:24875"/>
        <note>catalytic</note>
    </ligand>
</feature>
<feature type="binding site" evidence="2">
    <location>
        <position position="712"/>
    </location>
    <ligand>
        <name>Fe cation</name>
        <dbReference type="ChEBI" id="CHEBI:24875"/>
        <note>catalytic</note>
    </ligand>
</feature>
<feature type="binding site" evidence="2">
    <location>
        <position position="862"/>
    </location>
    <ligand>
        <name>Fe cation</name>
        <dbReference type="ChEBI" id="CHEBI:24875"/>
        <note>catalytic</note>
    </ligand>
</feature>
<evidence type="ECO:0000255" key="1">
    <source>
        <dbReference type="PROSITE-ProRule" id="PRU00152"/>
    </source>
</evidence>
<evidence type="ECO:0000255" key="2">
    <source>
        <dbReference type="PROSITE-ProRule" id="PRU00726"/>
    </source>
</evidence>
<evidence type="ECO:0000256" key="3">
    <source>
        <dbReference type="SAM" id="MobiDB-lite"/>
    </source>
</evidence>
<evidence type="ECO:0000305" key="4"/>
<keyword id="KW-0223">Dioxygenase</keyword>
<keyword id="KW-0903">Direct protein sequencing</keyword>
<keyword id="KW-0275">Fatty acid biosynthesis</keyword>
<keyword id="KW-0276">Fatty acid metabolism</keyword>
<keyword id="KW-0408">Iron</keyword>
<keyword id="KW-0444">Lipid biosynthesis</keyword>
<keyword id="KW-0443">Lipid metabolism</keyword>
<keyword id="KW-0479">Metal-binding</keyword>
<keyword id="KW-0560">Oxidoreductase</keyword>
<keyword id="KW-0925">Oxylipin biosynthesis</keyword>
<reference key="1">
    <citation type="journal article" date="1995" name="Biochim. Biophys. Acta">
        <title>Primary structure of a lipoxygenase from barley grain as deduced from its cDNA sequence.</title>
        <authorList>
            <person name="van Mechelen J.R."/>
            <person name="Smits M."/>
            <person name="Douma A.C."/>
            <person name="Rouster J."/>
            <person name="Cameron-Mills V."/>
            <person name="Heidekamp F."/>
            <person name="Valk B.E."/>
        </authorList>
    </citation>
    <scope>NUCLEOTIDE SEQUENCE [GENOMIC DNA]</scope>
    <source>
        <strain>cv. Triumph</strain>
    </source>
</reference>
<reference key="2">
    <citation type="journal article" date="2003" name="Mol. Plant Microbe Interact.">
        <title>Differential defense reactions in leaf tissues of barley in response to infection by Rhynchosporium secalis and to treatment with a fungal avirulence gene product.</title>
        <authorList>
            <person name="Steiner-Lange S."/>
            <person name="Fischer A."/>
            <person name="Boettcher A."/>
            <person name="Rouhara I."/>
            <person name="Liedgens H."/>
            <person name="Schmelzer E."/>
            <person name="Knogge W."/>
        </authorList>
    </citation>
    <scope>NUCLEOTIDE SEQUENCE [MRNA] OF 512-862</scope>
</reference>
<reference key="3">
    <citation type="journal article" date="1992" name="Biochim. Biophys. Acta">
        <title>Purification and characterization of two lipoxygenase isoenzymes from germinating barley.</title>
        <authorList>
            <person name="Doderer A."/>
            <person name="Kokkelink I."/>
            <person name="van der Veen S."/>
            <person name="Valk B.E."/>
            <person name="Schram A.W."/>
            <person name="Douma A.C."/>
        </authorList>
    </citation>
    <scope>PROTEIN SEQUENCE OF 274-294 AND 832-845</scope>
    <source>
        <strain>cv. Triumph</strain>
        <tissue>Embryo</tissue>
    </source>
</reference>